<organism>
    <name type="scientific">Mycoplasmoides gallisepticum (strain R(low / passage 15 / clone 2))</name>
    <name type="common">Mycoplasma gallisepticum</name>
    <dbReference type="NCBI Taxonomy" id="710127"/>
    <lineage>
        <taxon>Bacteria</taxon>
        <taxon>Bacillati</taxon>
        <taxon>Mycoplasmatota</taxon>
        <taxon>Mycoplasmoidales</taxon>
        <taxon>Mycoplasmoidaceae</taxon>
        <taxon>Mycoplasmoides</taxon>
    </lineage>
</organism>
<sequence>MDNNQNNFNQPGQQGFDQYQQQSGALVSYGYDANGNPVSDPSLAVYDANGMLINQNQYDQNQQQEYDQYGNPVGMLSGNVYSQENDPYYQQYNQQQNQGYEQQYDEYGNPIGLLPGSENQQNNQQQYDQYGNPIGMLPGGTNDQAYDPNQMQYDQYGNPVGMLAGVNANDQGYDYNQMQYDEYGNPVGMLPGGNANDQGYDYNQMQYDEYGNPPALYDNNQQDYYGYDQNQQYDQANNQLAVVDENYEQEQQVESNEEPAHEQDLREFLNNNSDTELVSYYEEEEDEKKPRNKKKQRQTAQARGLLPELATVNQPDQTPITPHLEAPVHYDENEELSTDDLSDDINLDQNQAVHHDAEDDVINIPIEDIESALLPKFEEIQRHNLEEIQKVKLEAAENFKVLQRANEELKSSNNELKTTNQQLKTSNEALEDSNKRIESQLQALLDSINDIKSKNNQPSQEEVDSRSKLEQRLEELAYKLDQTKEIIDETSESSRESFQQSKDQLIENFEKKIELLTEKLNQTQESFNQSQEAKQQQDKEFAQKIERIIEQTKEANDSLQNRVKESSLDMESKLENKFESFADKLTEITSKKISEKMTEQQASKKEEIDSLQSSFQKALSEVVSKVENYANQSQLQSQHLNQTLSYHQQQINNSLRQSAQMAQMAQMQHMMPQQMLMGMNNPYGFNHHTMMPPVHQYQQLPPPPPVQAPAQQLLPTINNPLQLPNENPTLFEKLMLANMFKQTINPPQPQPQALPQPHPQPQQLPPQILALPPTVVQQPNYLVPQPPRQPDYYSNRLNERMMLDDAYNAGYDEAVYELENQYYPPAYEYPEYEEIQPSFRRRGGRAKFDPYNNR</sequence>
<evidence type="ECO:0000255" key="1"/>
<evidence type="ECO:0000256" key="2">
    <source>
        <dbReference type="SAM" id="MobiDB-lite"/>
    </source>
</evidence>
<evidence type="ECO:0000269" key="3">
    <source>
    </source>
</evidence>
<evidence type="ECO:0000305" key="4"/>
<proteinExistence type="evidence at protein level"/>
<comment type="function">
    <text>Binds immobilized fibronectin, specifically the gelatin/heparin-binding domain.</text>
</comment>
<comment type="subcellular location">
    <subcellularLocation>
        <location>Cell membrane</location>
        <topology>Peripheral membrane protein</topology>
    </subcellularLocation>
    <text evidence="4">Epitopes are exposed at the cell surface.</text>
</comment>
<comment type="miscellaneous">
    <text evidence="3">Absent in high passage extracts (passage 164) versus low passage (passage 14) due to a 17 bp duplication that adds a premature codon.</text>
</comment>
<gene>
    <name type="primary">plpA</name>
    <name type="ordered locus">MYCGA3200</name>
    <name type="ORF">MGA_1199</name>
</gene>
<reference key="1">
    <citation type="journal article" date="2003" name="Microbiology">
        <title>The complete genome sequence of the avian pathogen Mycoplasma gallisepticum strain R(low).</title>
        <authorList>
            <person name="Papazisi L."/>
            <person name="Gorton T.S."/>
            <person name="Kutish G."/>
            <person name="Markham P.F."/>
            <person name="Browning G.F."/>
            <person name="Nguyen D.K."/>
            <person name="Swartzell S."/>
            <person name="Madan A."/>
            <person name="Mahairas G."/>
            <person name="Geary S.J."/>
        </authorList>
    </citation>
    <scope>NUCLEOTIDE SEQUENCE [LARGE SCALE GENOMIC DNA]</scope>
    <source>
        <strain>R(low / passage 15 / clone 2)</strain>
    </source>
</reference>
<reference key="2">
    <citation type="journal article" date="2006" name="Infect. Immun.">
        <title>Identification of fibronectin-binding proteins in Mycoplasma gallisepticum strain R.</title>
        <authorList>
            <person name="May M."/>
            <person name="Papazisi L."/>
            <person name="Gorton T.S."/>
            <person name="Geary S.J."/>
        </authorList>
    </citation>
    <scope>PROTEIN SEQUENCE OF 487-494</scope>
    <scope>FIBRONECTIN-BINDING</scope>
    <source>
        <strain>R(high / passage 164)</strain>
        <strain>R(low / passage 14)</strain>
    </source>
</reference>
<protein>
    <recommendedName>
        <fullName>Fibronectin-binding protein PlpA</fullName>
    </recommendedName>
    <alternativeName>
        <fullName>Pneumoniae-like protein A</fullName>
    </alternativeName>
</protein>
<feature type="chain" id="PRO_0000380124" description="Fibronectin-binding protein PlpA">
    <location>
        <begin position="1"/>
        <end position="854"/>
    </location>
</feature>
<feature type="region of interest" description="Disordered" evidence="2">
    <location>
        <begin position="1"/>
        <end position="33"/>
    </location>
</feature>
<feature type="region of interest" description="Fibronectin-binding">
    <location>
        <begin position="91"/>
        <end position="109"/>
    </location>
</feature>
<feature type="region of interest" description="Disordered" evidence="2">
    <location>
        <begin position="247"/>
        <end position="327"/>
    </location>
</feature>
<feature type="region of interest" description="Disordered" evidence="2">
    <location>
        <begin position="411"/>
        <end position="434"/>
    </location>
</feature>
<feature type="region of interest" description="Disordered" evidence="2">
    <location>
        <begin position="743"/>
        <end position="766"/>
    </location>
</feature>
<feature type="region of interest" description="Disordered" evidence="2">
    <location>
        <begin position="835"/>
        <end position="854"/>
    </location>
</feature>
<feature type="coiled-coil region" evidence="1">
    <location>
        <begin position="384"/>
        <end position="622"/>
    </location>
</feature>
<feature type="compositionally biased region" description="Low complexity" evidence="2">
    <location>
        <begin position="1"/>
        <end position="24"/>
    </location>
</feature>
<feature type="compositionally biased region" description="Basic and acidic residues" evidence="2">
    <location>
        <begin position="258"/>
        <end position="267"/>
    </location>
</feature>
<feature type="compositionally biased region" description="Polar residues" evidence="2">
    <location>
        <begin position="311"/>
        <end position="320"/>
    </location>
</feature>
<feature type="compositionally biased region" description="Polar residues" evidence="2">
    <location>
        <begin position="411"/>
        <end position="428"/>
    </location>
</feature>
<feature type="compositionally biased region" description="Pro residues" evidence="2">
    <location>
        <begin position="746"/>
        <end position="764"/>
    </location>
</feature>
<feature type="sequence variant" description="In high passage 164 isolate.">
    <location>
        <begin position="689"/>
        <end position="854"/>
    </location>
</feature>
<dbReference type="EMBL" id="AE015450">
    <property type="protein sequence ID" value="AAP56670.2"/>
    <property type="molecule type" value="Genomic_DNA"/>
</dbReference>
<dbReference type="RefSeq" id="WP_011113562.1">
    <property type="nucleotide sequence ID" value="NC_004829.2"/>
</dbReference>
<dbReference type="SMR" id="Q7NBF9"/>
<dbReference type="KEGG" id="mga:MGA_1199"/>
<dbReference type="PATRIC" id="fig|233150.7.peg.356"/>
<dbReference type="HOGENOM" id="CLU_333116_0_0_14"/>
<dbReference type="OrthoDB" id="9957890at2"/>
<dbReference type="Proteomes" id="UP000001418">
    <property type="component" value="Chromosome"/>
</dbReference>
<dbReference type="GO" id="GO:0005886">
    <property type="term" value="C:plasma membrane"/>
    <property type="evidence" value="ECO:0007669"/>
    <property type="project" value="UniProtKB-SubCell"/>
</dbReference>
<keyword id="KW-1003">Cell membrane</keyword>
<keyword id="KW-0175">Coiled coil</keyword>
<keyword id="KW-0903">Direct protein sequencing</keyword>
<keyword id="KW-0472">Membrane</keyword>
<keyword id="KW-1185">Reference proteome</keyword>
<keyword id="KW-0677">Repeat</keyword>
<keyword id="KW-0843">Virulence</keyword>
<accession>Q7NBF9</accession>
<name>PLPA_MYCGA</name>